<evidence type="ECO:0000255" key="1">
    <source>
        <dbReference type="HAMAP-Rule" id="MF_00161"/>
    </source>
</evidence>
<keyword id="KW-0064">Aspartyl protease</keyword>
<keyword id="KW-1003">Cell membrane</keyword>
<keyword id="KW-0378">Hydrolase</keyword>
<keyword id="KW-0472">Membrane</keyword>
<keyword id="KW-0645">Protease</keyword>
<keyword id="KW-0812">Transmembrane</keyword>
<keyword id="KW-1133">Transmembrane helix</keyword>
<organism>
    <name type="scientific">Lactococcus lactis subsp. cremoris (strain SK11)</name>
    <dbReference type="NCBI Taxonomy" id="272622"/>
    <lineage>
        <taxon>Bacteria</taxon>
        <taxon>Bacillati</taxon>
        <taxon>Bacillota</taxon>
        <taxon>Bacilli</taxon>
        <taxon>Lactobacillales</taxon>
        <taxon>Streptococcaceae</taxon>
        <taxon>Lactococcus</taxon>
        <taxon>Lactococcus cremoris subsp. cremoris</taxon>
    </lineage>
</organism>
<protein>
    <recommendedName>
        <fullName evidence="1">Lipoprotein signal peptidase</fullName>
        <ecNumber evidence="1">3.4.23.36</ecNumber>
    </recommendedName>
    <alternativeName>
        <fullName evidence="1">Prolipoprotein signal peptidase</fullName>
    </alternativeName>
    <alternativeName>
        <fullName evidence="1">Signal peptidase II</fullName>
        <shortName evidence="1">SPase II</shortName>
    </alternativeName>
</protein>
<comment type="function">
    <text evidence="1">This protein specifically catalyzes the removal of signal peptides from prolipoproteins.</text>
</comment>
<comment type="catalytic activity">
    <reaction evidence="1">
        <text>Release of signal peptides from bacterial membrane prolipoproteins. Hydrolyzes -Xaa-Yaa-Zaa-|-(S,diacylglyceryl)Cys-, in which Xaa is hydrophobic (preferably Leu), and Yaa (Ala or Ser) and Zaa (Gly or Ala) have small, neutral side chains.</text>
        <dbReference type="EC" id="3.4.23.36"/>
    </reaction>
</comment>
<comment type="pathway">
    <text evidence="1">Protein modification; lipoprotein biosynthesis (signal peptide cleavage).</text>
</comment>
<comment type="subcellular location">
    <subcellularLocation>
        <location evidence="1">Cell membrane</location>
        <topology evidence="1">Multi-pass membrane protein</topology>
    </subcellularLocation>
</comment>
<comment type="similarity">
    <text evidence="1">Belongs to the peptidase A8 family.</text>
</comment>
<name>LSPA_LACLS</name>
<reference key="1">
    <citation type="journal article" date="2006" name="Proc. Natl. Acad. Sci. U.S.A.">
        <title>Comparative genomics of the lactic acid bacteria.</title>
        <authorList>
            <person name="Makarova K.S."/>
            <person name="Slesarev A."/>
            <person name="Wolf Y.I."/>
            <person name="Sorokin A."/>
            <person name="Mirkin B."/>
            <person name="Koonin E.V."/>
            <person name="Pavlov A."/>
            <person name="Pavlova N."/>
            <person name="Karamychev V."/>
            <person name="Polouchine N."/>
            <person name="Shakhova V."/>
            <person name="Grigoriev I."/>
            <person name="Lou Y."/>
            <person name="Rohksar D."/>
            <person name="Lucas S."/>
            <person name="Huang K."/>
            <person name="Goodstein D.M."/>
            <person name="Hawkins T."/>
            <person name="Plengvidhya V."/>
            <person name="Welker D."/>
            <person name="Hughes J."/>
            <person name="Goh Y."/>
            <person name="Benson A."/>
            <person name="Baldwin K."/>
            <person name="Lee J.-H."/>
            <person name="Diaz-Muniz I."/>
            <person name="Dosti B."/>
            <person name="Smeianov V."/>
            <person name="Wechter W."/>
            <person name="Barabote R."/>
            <person name="Lorca G."/>
            <person name="Altermann E."/>
            <person name="Barrangou R."/>
            <person name="Ganesan B."/>
            <person name="Xie Y."/>
            <person name="Rawsthorne H."/>
            <person name="Tamir D."/>
            <person name="Parker C."/>
            <person name="Breidt F."/>
            <person name="Broadbent J.R."/>
            <person name="Hutkins R."/>
            <person name="O'Sullivan D."/>
            <person name="Steele J."/>
            <person name="Unlu G."/>
            <person name="Saier M.H. Jr."/>
            <person name="Klaenhammer T."/>
            <person name="Richardson P."/>
            <person name="Kozyavkin S."/>
            <person name="Weimer B.C."/>
            <person name="Mills D.A."/>
        </authorList>
    </citation>
    <scope>NUCLEOTIDE SEQUENCE [LARGE SCALE GENOMIC DNA]</scope>
    <source>
        <strain>SK11</strain>
    </source>
</reference>
<feature type="chain" id="PRO_0000289396" description="Lipoprotein signal peptidase">
    <location>
        <begin position="1"/>
        <end position="150"/>
    </location>
</feature>
<feature type="transmembrane region" description="Helical" evidence="1">
    <location>
        <begin position="5"/>
        <end position="25"/>
    </location>
</feature>
<feature type="transmembrane region" description="Helical" evidence="1">
    <location>
        <begin position="59"/>
        <end position="79"/>
    </location>
</feature>
<feature type="transmembrane region" description="Helical" evidence="1">
    <location>
        <begin position="82"/>
        <end position="102"/>
    </location>
</feature>
<feature type="transmembrane region" description="Helical" evidence="1">
    <location>
        <begin position="124"/>
        <end position="144"/>
    </location>
</feature>
<feature type="active site" evidence="1">
    <location>
        <position position="113"/>
    </location>
</feature>
<feature type="active site" evidence="1">
    <location>
        <position position="129"/>
    </location>
</feature>
<gene>
    <name evidence="1" type="primary">lspA</name>
    <name type="ordered locus">LACR_1081</name>
</gene>
<sequence length="150" mass="17069">MKKLLSLVIIVVGIIADQVFKNWVVANIQLGDTKKIWPDVLSLTYIKNDGAAWSSFSGQQWFFLVLTPIVLIVALWFLWKKMGQNWYFAGLTLIIAGALGNFMDRVRQGFVVDMFQTEFMNFPIFNIADILLSVGFVVLFIAILTDKETK</sequence>
<proteinExistence type="inferred from homology"/>
<dbReference type="EC" id="3.4.23.36" evidence="1"/>
<dbReference type="EMBL" id="CP000425">
    <property type="protein sequence ID" value="ABJ72616.1"/>
    <property type="molecule type" value="Genomic_DNA"/>
</dbReference>
<dbReference type="RefSeq" id="WP_011676002.1">
    <property type="nucleotide sequence ID" value="NC_008527.1"/>
</dbReference>
<dbReference type="SMR" id="Q02ZK6"/>
<dbReference type="KEGG" id="llc:LACR_1081"/>
<dbReference type="HOGENOM" id="CLU_083252_3_2_9"/>
<dbReference type="UniPathway" id="UPA00665"/>
<dbReference type="Proteomes" id="UP000000240">
    <property type="component" value="Chromosome"/>
</dbReference>
<dbReference type="GO" id="GO:0005886">
    <property type="term" value="C:plasma membrane"/>
    <property type="evidence" value="ECO:0007669"/>
    <property type="project" value="UniProtKB-SubCell"/>
</dbReference>
<dbReference type="GO" id="GO:0004190">
    <property type="term" value="F:aspartic-type endopeptidase activity"/>
    <property type="evidence" value="ECO:0007669"/>
    <property type="project" value="UniProtKB-UniRule"/>
</dbReference>
<dbReference type="GO" id="GO:0006508">
    <property type="term" value="P:proteolysis"/>
    <property type="evidence" value="ECO:0007669"/>
    <property type="project" value="UniProtKB-KW"/>
</dbReference>
<dbReference type="HAMAP" id="MF_00161">
    <property type="entry name" value="LspA"/>
    <property type="match status" value="1"/>
</dbReference>
<dbReference type="InterPro" id="IPR001872">
    <property type="entry name" value="Peptidase_A8"/>
</dbReference>
<dbReference type="NCBIfam" id="TIGR00077">
    <property type="entry name" value="lspA"/>
    <property type="match status" value="1"/>
</dbReference>
<dbReference type="PANTHER" id="PTHR33695">
    <property type="entry name" value="LIPOPROTEIN SIGNAL PEPTIDASE"/>
    <property type="match status" value="1"/>
</dbReference>
<dbReference type="PANTHER" id="PTHR33695:SF1">
    <property type="entry name" value="LIPOPROTEIN SIGNAL PEPTIDASE"/>
    <property type="match status" value="1"/>
</dbReference>
<dbReference type="Pfam" id="PF01252">
    <property type="entry name" value="Peptidase_A8"/>
    <property type="match status" value="1"/>
</dbReference>
<dbReference type="PRINTS" id="PR00781">
    <property type="entry name" value="LIPOSIGPTASE"/>
</dbReference>
<accession>Q02ZK6</accession>